<sequence length="103" mass="11709">MQGQKIRIRLKAFDYRLIDQSTQEIVDTAKRTGAQVRGPIPLPTKKERFTVLISPHVNKDARDQYEIRTHKRLLDIVEPTEKTVDALMKLDLAAGVDVQISLG</sequence>
<reference key="1">
    <citation type="journal article" date="2005" name="Nucleic Acids Res.">
        <title>Genomic blueprint of Hahella chejuensis, a marine microbe producing an algicidal agent.</title>
        <authorList>
            <person name="Jeong H."/>
            <person name="Yim J.H."/>
            <person name="Lee C."/>
            <person name="Choi S.-H."/>
            <person name="Park Y.K."/>
            <person name="Yoon S.H."/>
            <person name="Hur C.-G."/>
            <person name="Kang H.-Y."/>
            <person name="Kim D."/>
            <person name="Lee H.H."/>
            <person name="Park K.H."/>
            <person name="Park S.-H."/>
            <person name="Park H.-S."/>
            <person name="Lee H.K."/>
            <person name="Oh T.K."/>
            <person name="Kim J.F."/>
        </authorList>
    </citation>
    <scope>NUCLEOTIDE SEQUENCE [LARGE SCALE GENOMIC DNA]</scope>
    <source>
        <strain>KCTC 2396</strain>
    </source>
</reference>
<keyword id="KW-1185">Reference proteome</keyword>
<keyword id="KW-0687">Ribonucleoprotein</keyword>
<keyword id="KW-0689">Ribosomal protein</keyword>
<comment type="function">
    <text evidence="1">Involved in the binding of tRNA to the ribosomes.</text>
</comment>
<comment type="subunit">
    <text evidence="1">Part of the 30S ribosomal subunit.</text>
</comment>
<comment type="similarity">
    <text evidence="1">Belongs to the universal ribosomal protein uS10 family.</text>
</comment>
<accession>Q2S911</accession>
<proteinExistence type="inferred from homology"/>
<protein>
    <recommendedName>
        <fullName evidence="1">Small ribosomal subunit protein uS10</fullName>
    </recommendedName>
    <alternativeName>
        <fullName evidence="2">30S ribosomal protein S10</fullName>
    </alternativeName>
</protein>
<dbReference type="EMBL" id="CP000155">
    <property type="protein sequence ID" value="ABC32863.1"/>
    <property type="molecule type" value="Genomic_DNA"/>
</dbReference>
<dbReference type="RefSeq" id="WP_011399921.1">
    <property type="nucleotide sequence ID" value="NC_007645.1"/>
</dbReference>
<dbReference type="SMR" id="Q2S911"/>
<dbReference type="STRING" id="349521.HCH_06218"/>
<dbReference type="KEGG" id="hch:HCH_06218"/>
<dbReference type="eggNOG" id="COG0051">
    <property type="taxonomic scope" value="Bacteria"/>
</dbReference>
<dbReference type="HOGENOM" id="CLU_122625_1_3_6"/>
<dbReference type="OrthoDB" id="9804464at2"/>
<dbReference type="Proteomes" id="UP000000238">
    <property type="component" value="Chromosome"/>
</dbReference>
<dbReference type="GO" id="GO:1990904">
    <property type="term" value="C:ribonucleoprotein complex"/>
    <property type="evidence" value="ECO:0007669"/>
    <property type="project" value="UniProtKB-KW"/>
</dbReference>
<dbReference type="GO" id="GO:0005840">
    <property type="term" value="C:ribosome"/>
    <property type="evidence" value="ECO:0007669"/>
    <property type="project" value="UniProtKB-KW"/>
</dbReference>
<dbReference type="GO" id="GO:0003735">
    <property type="term" value="F:structural constituent of ribosome"/>
    <property type="evidence" value="ECO:0007669"/>
    <property type="project" value="InterPro"/>
</dbReference>
<dbReference type="GO" id="GO:0000049">
    <property type="term" value="F:tRNA binding"/>
    <property type="evidence" value="ECO:0007669"/>
    <property type="project" value="UniProtKB-UniRule"/>
</dbReference>
<dbReference type="GO" id="GO:0006412">
    <property type="term" value="P:translation"/>
    <property type="evidence" value="ECO:0007669"/>
    <property type="project" value="UniProtKB-UniRule"/>
</dbReference>
<dbReference type="FunFam" id="3.30.70.600:FF:000001">
    <property type="entry name" value="30S ribosomal protein S10"/>
    <property type="match status" value="1"/>
</dbReference>
<dbReference type="Gene3D" id="3.30.70.600">
    <property type="entry name" value="Ribosomal protein S10 domain"/>
    <property type="match status" value="1"/>
</dbReference>
<dbReference type="HAMAP" id="MF_00508">
    <property type="entry name" value="Ribosomal_uS10"/>
    <property type="match status" value="1"/>
</dbReference>
<dbReference type="InterPro" id="IPR001848">
    <property type="entry name" value="Ribosomal_uS10"/>
</dbReference>
<dbReference type="InterPro" id="IPR018268">
    <property type="entry name" value="Ribosomal_uS10_CS"/>
</dbReference>
<dbReference type="InterPro" id="IPR027486">
    <property type="entry name" value="Ribosomal_uS10_dom"/>
</dbReference>
<dbReference type="InterPro" id="IPR036838">
    <property type="entry name" value="Ribosomal_uS10_dom_sf"/>
</dbReference>
<dbReference type="NCBIfam" id="NF001861">
    <property type="entry name" value="PRK00596.1"/>
    <property type="match status" value="1"/>
</dbReference>
<dbReference type="NCBIfam" id="TIGR01049">
    <property type="entry name" value="rpsJ_bact"/>
    <property type="match status" value="1"/>
</dbReference>
<dbReference type="PANTHER" id="PTHR11700">
    <property type="entry name" value="30S RIBOSOMAL PROTEIN S10 FAMILY MEMBER"/>
    <property type="match status" value="1"/>
</dbReference>
<dbReference type="Pfam" id="PF00338">
    <property type="entry name" value="Ribosomal_S10"/>
    <property type="match status" value="1"/>
</dbReference>
<dbReference type="PRINTS" id="PR00971">
    <property type="entry name" value="RIBOSOMALS10"/>
</dbReference>
<dbReference type="SMART" id="SM01403">
    <property type="entry name" value="Ribosomal_S10"/>
    <property type="match status" value="1"/>
</dbReference>
<dbReference type="SUPFAM" id="SSF54999">
    <property type="entry name" value="Ribosomal protein S10"/>
    <property type="match status" value="1"/>
</dbReference>
<dbReference type="PROSITE" id="PS00361">
    <property type="entry name" value="RIBOSOMAL_S10"/>
    <property type="match status" value="1"/>
</dbReference>
<feature type="chain" id="PRO_0000237051" description="Small ribosomal subunit protein uS10">
    <location>
        <begin position="1"/>
        <end position="103"/>
    </location>
</feature>
<organism>
    <name type="scientific">Hahella chejuensis (strain KCTC 2396)</name>
    <dbReference type="NCBI Taxonomy" id="349521"/>
    <lineage>
        <taxon>Bacteria</taxon>
        <taxon>Pseudomonadati</taxon>
        <taxon>Pseudomonadota</taxon>
        <taxon>Gammaproteobacteria</taxon>
        <taxon>Oceanospirillales</taxon>
        <taxon>Hahellaceae</taxon>
        <taxon>Hahella</taxon>
    </lineage>
</organism>
<evidence type="ECO:0000255" key="1">
    <source>
        <dbReference type="HAMAP-Rule" id="MF_00508"/>
    </source>
</evidence>
<evidence type="ECO:0000305" key="2"/>
<name>RS10_HAHCH</name>
<gene>
    <name evidence="1" type="primary">rpsJ</name>
    <name type="ordered locus">HCH_06218</name>
</gene>